<evidence type="ECO:0000255" key="1">
    <source>
        <dbReference type="HAMAP-Rule" id="MF_00139"/>
    </source>
</evidence>
<evidence type="ECO:0000255" key="2">
    <source>
        <dbReference type="PROSITE-ProRule" id="PRU01202"/>
    </source>
</evidence>
<organism>
    <name type="scientific">Erwinia tasmaniensis (strain DSM 17950 / CFBP 7177 / CIP 109463 / NCPPB 4357 / Et1/99)</name>
    <dbReference type="NCBI Taxonomy" id="465817"/>
    <lineage>
        <taxon>Bacteria</taxon>
        <taxon>Pseudomonadati</taxon>
        <taxon>Pseudomonadota</taxon>
        <taxon>Gammaproteobacteria</taxon>
        <taxon>Enterobacterales</taxon>
        <taxon>Erwiniaceae</taxon>
        <taxon>Erwinia</taxon>
    </lineage>
</organism>
<dbReference type="EC" id="2.1.2.3" evidence="1"/>
<dbReference type="EC" id="3.5.4.10" evidence="1"/>
<dbReference type="EMBL" id="CU468135">
    <property type="protein sequence ID" value="CAO95226.1"/>
    <property type="molecule type" value="Genomic_DNA"/>
</dbReference>
<dbReference type="RefSeq" id="WP_012439946.1">
    <property type="nucleotide sequence ID" value="NC_010694.1"/>
</dbReference>
<dbReference type="SMR" id="B2VG81"/>
<dbReference type="STRING" id="465817.ETA_01800"/>
<dbReference type="KEGG" id="eta:ETA_01800"/>
<dbReference type="eggNOG" id="COG0138">
    <property type="taxonomic scope" value="Bacteria"/>
</dbReference>
<dbReference type="HOGENOM" id="CLU_016316_5_2_6"/>
<dbReference type="OrthoDB" id="9802065at2"/>
<dbReference type="UniPathway" id="UPA00074">
    <property type="reaction ID" value="UER00133"/>
</dbReference>
<dbReference type="UniPathway" id="UPA00074">
    <property type="reaction ID" value="UER00135"/>
</dbReference>
<dbReference type="Proteomes" id="UP000001726">
    <property type="component" value="Chromosome"/>
</dbReference>
<dbReference type="GO" id="GO:0005829">
    <property type="term" value="C:cytosol"/>
    <property type="evidence" value="ECO:0007669"/>
    <property type="project" value="TreeGrafter"/>
</dbReference>
<dbReference type="GO" id="GO:0003937">
    <property type="term" value="F:IMP cyclohydrolase activity"/>
    <property type="evidence" value="ECO:0007669"/>
    <property type="project" value="UniProtKB-UniRule"/>
</dbReference>
<dbReference type="GO" id="GO:0004643">
    <property type="term" value="F:phosphoribosylaminoimidazolecarboxamide formyltransferase activity"/>
    <property type="evidence" value="ECO:0007669"/>
    <property type="project" value="UniProtKB-UniRule"/>
</dbReference>
<dbReference type="GO" id="GO:0006189">
    <property type="term" value="P:'de novo' IMP biosynthetic process"/>
    <property type="evidence" value="ECO:0007669"/>
    <property type="project" value="UniProtKB-UniRule"/>
</dbReference>
<dbReference type="CDD" id="cd01421">
    <property type="entry name" value="IMPCH"/>
    <property type="match status" value="1"/>
</dbReference>
<dbReference type="FunFam" id="3.40.140.20:FF:000001">
    <property type="entry name" value="Bifunctional purine biosynthesis protein PurH"/>
    <property type="match status" value="1"/>
</dbReference>
<dbReference type="FunFam" id="3.40.140.20:FF:000002">
    <property type="entry name" value="Bifunctional purine biosynthesis protein PurH"/>
    <property type="match status" value="1"/>
</dbReference>
<dbReference type="FunFam" id="3.40.50.1380:FF:000001">
    <property type="entry name" value="Bifunctional purine biosynthesis protein PurH"/>
    <property type="match status" value="1"/>
</dbReference>
<dbReference type="Gene3D" id="3.40.140.20">
    <property type="match status" value="2"/>
</dbReference>
<dbReference type="Gene3D" id="3.40.50.1380">
    <property type="entry name" value="Methylglyoxal synthase-like domain"/>
    <property type="match status" value="1"/>
</dbReference>
<dbReference type="HAMAP" id="MF_00139">
    <property type="entry name" value="PurH"/>
    <property type="match status" value="1"/>
</dbReference>
<dbReference type="InterPro" id="IPR024051">
    <property type="entry name" value="AICAR_Tfase_dup_dom_sf"/>
</dbReference>
<dbReference type="InterPro" id="IPR016193">
    <property type="entry name" value="Cytidine_deaminase-like"/>
</dbReference>
<dbReference type="InterPro" id="IPR011607">
    <property type="entry name" value="MGS-like_dom"/>
</dbReference>
<dbReference type="InterPro" id="IPR036914">
    <property type="entry name" value="MGS-like_dom_sf"/>
</dbReference>
<dbReference type="InterPro" id="IPR002695">
    <property type="entry name" value="PurH-like"/>
</dbReference>
<dbReference type="NCBIfam" id="NF002049">
    <property type="entry name" value="PRK00881.1"/>
    <property type="match status" value="1"/>
</dbReference>
<dbReference type="NCBIfam" id="TIGR00355">
    <property type="entry name" value="purH"/>
    <property type="match status" value="1"/>
</dbReference>
<dbReference type="PANTHER" id="PTHR11692:SF0">
    <property type="entry name" value="BIFUNCTIONAL PURINE BIOSYNTHESIS PROTEIN ATIC"/>
    <property type="match status" value="1"/>
</dbReference>
<dbReference type="PANTHER" id="PTHR11692">
    <property type="entry name" value="BIFUNCTIONAL PURINE BIOSYNTHESIS PROTEIN PURH"/>
    <property type="match status" value="1"/>
</dbReference>
<dbReference type="Pfam" id="PF01808">
    <property type="entry name" value="AICARFT_IMPCHas"/>
    <property type="match status" value="1"/>
</dbReference>
<dbReference type="Pfam" id="PF02142">
    <property type="entry name" value="MGS"/>
    <property type="match status" value="1"/>
</dbReference>
<dbReference type="PIRSF" id="PIRSF000414">
    <property type="entry name" value="AICARFT_IMPCHas"/>
    <property type="match status" value="1"/>
</dbReference>
<dbReference type="SMART" id="SM00798">
    <property type="entry name" value="AICARFT_IMPCHas"/>
    <property type="match status" value="1"/>
</dbReference>
<dbReference type="SMART" id="SM00851">
    <property type="entry name" value="MGS"/>
    <property type="match status" value="1"/>
</dbReference>
<dbReference type="SUPFAM" id="SSF53927">
    <property type="entry name" value="Cytidine deaminase-like"/>
    <property type="match status" value="1"/>
</dbReference>
<dbReference type="SUPFAM" id="SSF52335">
    <property type="entry name" value="Methylglyoxal synthase-like"/>
    <property type="match status" value="1"/>
</dbReference>
<dbReference type="PROSITE" id="PS51855">
    <property type="entry name" value="MGS"/>
    <property type="match status" value="1"/>
</dbReference>
<name>PUR9_ERWT9</name>
<feature type="chain" id="PRO_1000096064" description="Bifunctional purine biosynthesis protein PurH">
    <location>
        <begin position="1"/>
        <end position="529"/>
    </location>
</feature>
<feature type="domain" description="MGS-like" evidence="2">
    <location>
        <begin position="1"/>
        <end position="148"/>
    </location>
</feature>
<proteinExistence type="inferred from homology"/>
<reference key="1">
    <citation type="journal article" date="2008" name="Environ. Microbiol.">
        <title>The genome of Erwinia tasmaniensis strain Et1/99, a non-pathogenic bacterium in the genus Erwinia.</title>
        <authorList>
            <person name="Kube M."/>
            <person name="Migdoll A.M."/>
            <person name="Mueller I."/>
            <person name="Kuhl H."/>
            <person name="Beck A."/>
            <person name="Reinhardt R."/>
            <person name="Geider K."/>
        </authorList>
    </citation>
    <scope>NUCLEOTIDE SEQUENCE [LARGE SCALE GENOMIC DNA]</scope>
    <source>
        <strain>DSM 17950 / CFBP 7177 / CIP 109463 / NCPPB 4357 / Et1/99</strain>
    </source>
</reference>
<accession>B2VG81</accession>
<sequence>MQQHRPVRRALLSVSDKAGILEFAQALSQRGVELLSTGGTARLLADAGLPVTEVSDYTGFPEMMDGRVKTLHPKVHGGILGRRGQDDAIMTEHGISPIDMVVVNLYPFAQTVSRADCSLEDAVENIDIGGPTMVRSAAKNHKDVAIVVKSSDYQAIIAELDANECSLTLATRFDLAIKAFEHTAAYDSMIANYFGSMVPAYHGETTEPAGRFPRTLNLNFIKKQDMRYGENSHQQAAFYIEEHVGEASVATAQQVQGKALSYNNIADTDAALECVKEFDQPACVIVKHANPCGVATGSAIIEAYERAYQTDPTSAFGGIIAFNRELDEATARAIISRQFVEVIIAPSASDAALKITAAKQNVRVLTCGQWQQRQTGLDFKRVNGGLLVQDRDLGMVSDSQLRVVSKRQPSEQELRDALFCWKVAKFVKSNAIVYARDNMTIGIGAGQMSRVYSAKIAAIKAADEGLEVTGSSMASDAFFPFRDGIDAAAAVGITCVIQPGGSIRDDEVIAAADEHGIAMIFTGMRHFRH</sequence>
<gene>
    <name evidence="1" type="primary">purH</name>
    <name type="ordered locus">ETA_01800</name>
</gene>
<protein>
    <recommendedName>
        <fullName evidence="1">Bifunctional purine biosynthesis protein PurH</fullName>
    </recommendedName>
    <domain>
        <recommendedName>
            <fullName evidence="1">Phosphoribosylaminoimidazolecarboxamide formyltransferase</fullName>
            <ecNumber evidence="1">2.1.2.3</ecNumber>
        </recommendedName>
        <alternativeName>
            <fullName evidence="1">AICAR transformylase</fullName>
        </alternativeName>
    </domain>
    <domain>
        <recommendedName>
            <fullName evidence="1">IMP cyclohydrolase</fullName>
            <ecNumber evidence="1">3.5.4.10</ecNumber>
        </recommendedName>
        <alternativeName>
            <fullName evidence="1">ATIC</fullName>
        </alternativeName>
        <alternativeName>
            <fullName evidence="1">IMP synthase</fullName>
        </alternativeName>
        <alternativeName>
            <fullName evidence="1">Inosinicase</fullName>
        </alternativeName>
    </domain>
</protein>
<comment type="catalytic activity">
    <reaction evidence="1">
        <text>(6R)-10-formyltetrahydrofolate + 5-amino-1-(5-phospho-beta-D-ribosyl)imidazole-4-carboxamide = 5-formamido-1-(5-phospho-D-ribosyl)imidazole-4-carboxamide + (6S)-5,6,7,8-tetrahydrofolate</text>
        <dbReference type="Rhea" id="RHEA:22192"/>
        <dbReference type="ChEBI" id="CHEBI:57453"/>
        <dbReference type="ChEBI" id="CHEBI:58467"/>
        <dbReference type="ChEBI" id="CHEBI:58475"/>
        <dbReference type="ChEBI" id="CHEBI:195366"/>
        <dbReference type="EC" id="2.1.2.3"/>
    </reaction>
</comment>
<comment type="catalytic activity">
    <reaction evidence="1">
        <text>IMP + H2O = 5-formamido-1-(5-phospho-D-ribosyl)imidazole-4-carboxamide</text>
        <dbReference type="Rhea" id="RHEA:18445"/>
        <dbReference type="ChEBI" id="CHEBI:15377"/>
        <dbReference type="ChEBI" id="CHEBI:58053"/>
        <dbReference type="ChEBI" id="CHEBI:58467"/>
        <dbReference type="EC" id="3.5.4.10"/>
    </reaction>
</comment>
<comment type="pathway">
    <text evidence="1">Purine metabolism; IMP biosynthesis via de novo pathway; 5-formamido-1-(5-phospho-D-ribosyl)imidazole-4-carboxamide from 5-amino-1-(5-phospho-D-ribosyl)imidazole-4-carboxamide (10-formyl THF route): step 1/1.</text>
</comment>
<comment type="pathway">
    <text evidence="1">Purine metabolism; IMP biosynthesis via de novo pathway; IMP from 5-formamido-1-(5-phospho-D-ribosyl)imidazole-4-carboxamide: step 1/1.</text>
</comment>
<comment type="domain">
    <text evidence="1">The IMP cyclohydrolase activity resides in the N-terminal region.</text>
</comment>
<comment type="similarity">
    <text evidence="1">Belongs to the PurH family.</text>
</comment>
<keyword id="KW-0378">Hydrolase</keyword>
<keyword id="KW-0511">Multifunctional enzyme</keyword>
<keyword id="KW-0658">Purine biosynthesis</keyword>
<keyword id="KW-1185">Reference proteome</keyword>
<keyword id="KW-0808">Transferase</keyword>